<dbReference type="EC" id="2.5.1.-" evidence="1"/>
<dbReference type="EMBL" id="BA000004">
    <property type="protein sequence ID" value="BAB06142.1"/>
    <property type="molecule type" value="Genomic_DNA"/>
</dbReference>
<dbReference type="PIR" id="G83952">
    <property type="entry name" value="G83952"/>
</dbReference>
<dbReference type="RefSeq" id="WP_010898576.1">
    <property type="nucleotide sequence ID" value="NC_002570.2"/>
</dbReference>
<dbReference type="SMR" id="Q9KA67"/>
<dbReference type="STRING" id="272558.gene:10728321"/>
<dbReference type="GeneID" id="87597943"/>
<dbReference type="KEGG" id="bha:BH2423"/>
<dbReference type="eggNOG" id="COG0020">
    <property type="taxonomic scope" value="Bacteria"/>
</dbReference>
<dbReference type="HOGENOM" id="CLU_038505_1_1_9"/>
<dbReference type="OrthoDB" id="4191603at2"/>
<dbReference type="Proteomes" id="UP000001258">
    <property type="component" value="Chromosome"/>
</dbReference>
<dbReference type="GO" id="GO:0005829">
    <property type="term" value="C:cytosol"/>
    <property type="evidence" value="ECO:0007669"/>
    <property type="project" value="TreeGrafter"/>
</dbReference>
<dbReference type="GO" id="GO:0008834">
    <property type="term" value="F:ditrans,polycis-undecaprenyl-diphosphate synthase [(2E,6E)-farnesyl-diphosphate specific] activity"/>
    <property type="evidence" value="ECO:0007669"/>
    <property type="project" value="TreeGrafter"/>
</dbReference>
<dbReference type="GO" id="GO:0000287">
    <property type="term" value="F:magnesium ion binding"/>
    <property type="evidence" value="ECO:0007669"/>
    <property type="project" value="UniProtKB-UniRule"/>
</dbReference>
<dbReference type="GO" id="GO:0030145">
    <property type="term" value="F:manganese ion binding"/>
    <property type="evidence" value="ECO:0007669"/>
    <property type="project" value="TreeGrafter"/>
</dbReference>
<dbReference type="GO" id="GO:0016094">
    <property type="term" value="P:polyprenol biosynthetic process"/>
    <property type="evidence" value="ECO:0007669"/>
    <property type="project" value="TreeGrafter"/>
</dbReference>
<dbReference type="CDD" id="cd00475">
    <property type="entry name" value="Cis_IPPS"/>
    <property type="match status" value="1"/>
</dbReference>
<dbReference type="FunFam" id="3.40.1180.10:FF:000001">
    <property type="entry name" value="(2E,6E)-farnesyl-diphosphate-specific ditrans,polycis-undecaprenyl-diphosphate synthase"/>
    <property type="match status" value="1"/>
</dbReference>
<dbReference type="Gene3D" id="3.40.1180.10">
    <property type="entry name" value="Decaprenyl diphosphate synthase-like"/>
    <property type="match status" value="1"/>
</dbReference>
<dbReference type="HAMAP" id="MF_01139">
    <property type="entry name" value="ISPT"/>
    <property type="match status" value="1"/>
</dbReference>
<dbReference type="InterPro" id="IPR001441">
    <property type="entry name" value="UPP_synth-like"/>
</dbReference>
<dbReference type="InterPro" id="IPR018520">
    <property type="entry name" value="UPP_synth-like_CS"/>
</dbReference>
<dbReference type="InterPro" id="IPR036424">
    <property type="entry name" value="UPP_synth-like_sf"/>
</dbReference>
<dbReference type="NCBIfam" id="NF011405">
    <property type="entry name" value="PRK14830.1"/>
    <property type="match status" value="1"/>
</dbReference>
<dbReference type="NCBIfam" id="TIGR00055">
    <property type="entry name" value="uppS"/>
    <property type="match status" value="1"/>
</dbReference>
<dbReference type="PANTHER" id="PTHR10291:SF0">
    <property type="entry name" value="DEHYDRODOLICHYL DIPHOSPHATE SYNTHASE 2"/>
    <property type="match status" value="1"/>
</dbReference>
<dbReference type="PANTHER" id="PTHR10291">
    <property type="entry name" value="DEHYDRODOLICHYL DIPHOSPHATE SYNTHASE FAMILY MEMBER"/>
    <property type="match status" value="1"/>
</dbReference>
<dbReference type="Pfam" id="PF01255">
    <property type="entry name" value="Prenyltransf"/>
    <property type="match status" value="1"/>
</dbReference>
<dbReference type="SUPFAM" id="SSF64005">
    <property type="entry name" value="Undecaprenyl diphosphate synthase"/>
    <property type="match status" value="1"/>
</dbReference>
<dbReference type="PROSITE" id="PS01066">
    <property type="entry name" value="UPP_SYNTHASE"/>
    <property type="match status" value="1"/>
</dbReference>
<keyword id="KW-0460">Magnesium</keyword>
<keyword id="KW-0479">Metal-binding</keyword>
<keyword id="KW-1185">Reference proteome</keyword>
<keyword id="KW-0808">Transferase</keyword>
<feature type="chain" id="PRO_0000123569" description="Isoprenyl transferase">
    <location>
        <begin position="1"/>
        <end position="256"/>
    </location>
</feature>
<feature type="region of interest" description="Disordered" evidence="2">
    <location>
        <begin position="1"/>
        <end position="22"/>
    </location>
</feature>
<feature type="active site" evidence="1">
    <location>
        <position position="36"/>
    </location>
</feature>
<feature type="active site" description="Proton acceptor" evidence="1">
    <location>
        <position position="84"/>
    </location>
</feature>
<feature type="binding site" evidence="1">
    <location>
        <position position="36"/>
    </location>
    <ligand>
        <name>Mg(2+)</name>
        <dbReference type="ChEBI" id="CHEBI:18420"/>
    </ligand>
</feature>
<feature type="binding site" evidence="1">
    <location>
        <begin position="37"/>
        <end position="40"/>
    </location>
    <ligand>
        <name>substrate</name>
    </ligand>
</feature>
<feature type="binding site" evidence="1">
    <location>
        <position position="41"/>
    </location>
    <ligand>
        <name>substrate</name>
    </ligand>
</feature>
<feature type="binding site" evidence="1">
    <location>
        <position position="49"/>
    </location>
    <ligand>
        <name>substrate</name>
    </ligand>
</feature>
<feature type="binding site" evidence="1">
    <location>
        <position position="53"/>
    </location>
    <ligand>
        <name>substrate</name>
    </ligand>
</feature>
<feature type="binding site" evidence="1">
    <location>
        <begin position="81"/>
        <end position="83"/>
    </location>
    <ligand>
        <name>substrate</name>
    </ligand>
</feature>
<feature type="binding site" evidence="1">
    <location>
        <position position="85"/>
    </location>
    <ligand>
        <name>substrate</name>
    </ligand>
</feature>
<feature type="binding site" evidence="1">
    <location>
        <position position="87"/>
    </location>
    <ligand>
        <name>substrate</name>
    </ligand>
</feature>
<feature type="binding site" evidence="1">
    <location>
        <position position="204"/>
    </location>
    <ligand>
        <name>substrate</name>
    </ligand>
</feature>
<feature type="binding site" evidence="1">
    <location>
        <begin position="210"/>
        <end position="212"/>
    </location>
    <ligand>
        <name>substrate</name>
    </ligand>
</feature>
<feature type="binding site" evidence="1">
    <location>
        <position position="223"/>
    </location>
    <ligand>
        <name>Mg(2+)</name>
        <dbReference type="ChEBI" id="CHEBI:18420"/>
    </ligand>
</feature>
<accession>Q9KA67</accession>
<protein>
    <recommendedName>
        <fullName evidence="1">Isoprenyl transferase</fullName>
        <ecNumber evidence="1">2.5.1.-</ecNumber>
    </recommendedName>
</protein>
<gene>
    <name evidence="1" type="primary">uppS</name>
    <name type="ordered locus">BH2423</name>
</gene>
<sequence length="256" mass="29430">MLEKFSKWKGNRSNHTTPSHSLDESAIPKHVAIIMDGNGRWAKKKGLPRIAGHREGMKVINKIVRKAIDLKIEVLSLYAFSTENWKRPRTEVDYLLKLPERFLKLELPNLMEENVQVRIMGGLDTLPEHTAKAVTKAMEETKDNTGLILNFALNYGSRYEMVEAMKQVAKEVETGTLSSDAITEDVISRHLMTADLRDPDLLIRTSGEIRLSNFMLWQLAYSEFWFTDVLWPDFTEHHLTEAIAVYQKRARRYGGV</sequence>
<name>ISPT_HALH5</name>
<comment type="function">
    <text evidence="1">Catalyzes the condensation of isopentenyl diphosphate (IPP) with allylic pyrophosphates generating different type of terpenoids.</text>
</comment>
<comment type="cofactor">
    <cofactor evidence="1">
        <name>Mg(2+)</name>
        <dbReference type="ChEBI" id="CHEBI:18420"/>
    </cofactor>
    <text evidence="1">Binds 2 magnesium ions per subunit.</text>
</comment>
<comment type="subunit">
    <text evidence="1">Homodimer.</text>
</comment>
<comment type="similarity">
    <text evidence="1">Belongs to the UPP synthase family.</text>
</comment>
<organism>
    <name type="scientific">Halalkalibacterium halodurans (strain ATCC BAA-125 / DSM 18197 / FERM 7344 / JCM 9153 / C-125)</name>
    <name type="common">Bacillus halodurans</name>
    <dbReference type="NCBI Taxonomy" id="272558"/>
    <lineage>
        <taxon>Bacteria</taxon>
        <taxon>Bacillati</taxon>
        <taxon>Bacillota</taxon>
        <taxon>Bacilli</taxon>
        <taxon>Bacillales</taxon>
        <taxon>Bacillaceae</taxon>
        <taxon>Halalkalibacterium (ex Joshi et al. 2022)</taxon>
    </lineage>
</organism>
<proteinExistence type="inferred from homology"/>
<reference key="1">
    <citation type="journal article" date="2000" name="Nucleic Acids Res.">
        <title>Complete genome sequence of the alkaliphilic bacterium Bacillus halodurans and genomic sequence comparison with Bacillus subtilis.</title>
        <authorList>
            <person name="Takami H."/>
            <person name="Nakasone K."/>
            <person name="Takaki Y."/>
            <person name="Maeno G."/>
            <person name="Sasaki R."/>
            <person name="Masui N."/>
            <person name="Fuji F."/>
            <person name="Hirama C."/>
            <person name="Nakamura Y."/>
            <person name="Ogasawara N."/>
            <person name="Kuhara S."/>
            <person name="Horikoshi K."/>
        </authorList>
    </citation>
    <scope>NUCLEOTIDE SEQUENCE [LARGE SCALE GENOMIC DNA]</scope>
    <source>
        <strain>ATCC BAA-125 / DSM 18197 / FERM 7344 / JCM 9153 / C-125</strain>
    </source>
</reference>
<evidence type="ECO:0000255" key="1">
    <source>
        <dbReference type="HAMAP-Rule" id="MF_01139"/>
    </source>
</evidence>
<evidence type="ECO:0000256" key="2">
    <source>
        <dbReference type="SAM" id="MobiDB-lite"/>
    </source>
</evidence>